<sequence>MKYQQLENLESGWKWKYLVKKHREGELITRYVEASAAQEAVNLLLALENEPVRVNVWIDRHMNPALLNRMKQTIRARRKRHFNAEHQHTRKKSIDLEFMVWQRLAGLAQRRGKTLSETIVQLIEDAEHKEKYATQMTTLKQDLQALLGKK</sequence>
<dbReference type="EMBL" id="CP001113">
    <property type="protein sequence ID" value="ACF61699.1"/>
    <property type="molecule type" value="Genomic_DNA"/>
</dbReference>
<dbReference type="RefSeq" id="WP_000877172.1">
    <property type="nucleotide sequence ID" value="NZ_CCMR01000003.1"/>
</dbReference>
<dbReference type="SMR" id="B4T1Z9"/>
<dbReference type="KEGG" id="see:SNSL254_A1110"/>
<dbReference type="HOGENOM" id="CLU_142157_0_0_6"/>
<dbReference type="Proteomes" id="UP000008824">
    <property type="component" value="Chromosome"/>
</dbReference>
<dbReference type="GO" id="GO:0005737">
    <property type="term" value="C:cytoplasm"/>
    <property type="evidence" value="ECO:0007669"/>
    <property type="project" value="UniProtKB-SubCell"/>
</dbReference>
<dbReference type="GO" id="GO:0043565">
    <property type="term" value="F:sequence-specific DNA binding"/>
    <property type="evidence" value="ECO:0007669"/>
    <property type="project" value="UniProtKB-UniRule"/>
</dbReference>
<dbReference type="GO" id="GO:0051301">
    <property type="term" value="P:cell division"/>
    <property type="evidence" value="ECO:0007669"/>
    <property type="project" value="UniProtKB-UniRule"/>
</dbReference>
<dbReference type="GO" id="GO:0006355">
    <property type="term" value="P:regulation of DNA-templated transcription"/>
    <property type="evidence" value="ECO:0007669"/>
    <property type="project" value="InterPro"/>
</dbReference>
<dbReference type="Gene3D" id="1.20.1270.380">
    <property type="entry name" value="MatP, N-terminal domain"/>
    <property type="match status" value="1"/>
</dbReference>
<dbReference type="Gene3D" id="1.10.1220.10">
    <property type="entry name" value="Met repressor-like"/>
    <property type="match status" value="1"/>
</dbReference>
<dbReference type="HAMAP" id="MF_01073">
    <property type="entry name" value="MatP"/>
    <property type="match status" value="1"/>
</dbReference>
<dbReference type="InterPro" id="IPR013321">
    <property type="entry name" value="Arc_rbn_hlx_hlx"/>
</dbReference>
<dbReference type="InterPro" id="IPR009390">
    <property type="entry name" value="MatP"/>
</dbReference>
<dbReference type="InterPro" id="IPR035375">
    <property type="entry name" value="MatP_C"/>
</dbReference>
<dbReference type="InterPro" id="IPR035087">
    <property type="entry name" value="MatP_N"/>
</dbReference>
<dbReference type="InterPro" id="IPR038339">
    <property type="entry name" value="MatP_N_sf"/>
</dbReference>
<dbReference type="NCBIfam" id="NF003471">
    <property type="entry name" value="PRK05097.1"/>
    <property type="match status" value="1"/>
</dbReference>
<dbReference type="Pfam" id="PF06303">
    <property type="entry name" value="MatP"/>
    <property type="match status" value="1"/>
</dbReference>
<dbReference type="Pfam" id="PF17414">
    <property type="entry name" value="MatP_C"/>
    <property type="match status" value="1"/>
</dbReference>
<gene>
    <name evidence="1" type="primary">matP</name>
    <name type="ordered locus">SNSL254_A1110</name>
</gene>
<organism>
    <name type="scientific">Salmonella newport (strain SL254)</name>
    <dbReference type="NCBI Taxonomy" id="423368"/>
    <lineage>
        <taxon>Bacteria</taxon>
        <taxon>Pseudomonadati</taxon>
        <taxon>Pseudomonadota</taxon>
        <taxon>Gammaproteobacteria</taxon>
        <taxon>Enterobacterales</taxon>
        <taxon>Enterobacteriaceae</taxon>
        <taxon>Salmonella</taxon>
    </lineage>
</organism>
<accession>B4T1Z9</accession>
<comment type="function">
    <text evidence="1">Required for spatial organization of the terminus region of the chromosome (Ter macrodomain) during the cell cycle. Prevents early segregation of duplicated Ter macrodomains during cell division. Binds specifically to matS, which is a 13 bp signature motif repeated within the Ter macrodomain.</text>
</comment>
<comment type="subunit">
    <text evidence="1">Homodimer.</text>
</comment>
<comment type="subcellular location">
    <subcellularLocation>
        <location evidence="1">Cytoplasm</location>
    </subcellularLocation>
</comment>
<comment type="similarity">
    <text evidence="1">Belongs to the MatP family.</text>
</comment>
<feature type="chain" id="PRO_1000136678" description="Macrodomain Ter protein">
    <location>
        <begin position="1"/>
        <end position="150"/>
    </location>
</feature>
<name>MATP_SALNS</name>
<proteinExistence type="inferred from homology"/>
<protein>
    <recommendedName>
        <fullName evidence="1">Macrodomain Ter protein</fullName>
    </recommendedName>
</protein>
<keyword id="KW-0131">Cell cycle</keyword>
<keyword id="KW-0132">Cell division</keyword>
<keyword id="KW-0963">Cytoplasm</keyword>
<keyword id="KW-0238">DNA-binding</keyword>
<evidence type="ECO:0000255" key="1">
    <source>
        <dbReference type="HAMAP-Rule" id="MF_01073"/>
    </source>
</evidence>
<reference key="1">
    <citation type="journal article" date="2011" name="J. Bacteriol.">
        <title>Comparative genomics of 28 Salmonella enterica isolates: evidence for CRISPR-mediated adaptive sublineage evolution.</title>
        <authorList>
            <person name="Fricke W.F."/>
            <person name="Mammel M.K."/>
            <person name="McDermott P.F."/>
            <person name="Tartera C."/>
            <person name="White D.G."/>
            <person name="Leclerc J.E."/>
            <person name="Ravel J."/>
            <person name="Cebula T.A."/>
        </authorList>
    </citation>
    <scope>NUCLEOTIDE SEQUENCE [LARGE SCALE GENOMIC DNA]</scope>
    <source>
        <strain>SL254</strain>
    </source>
</reference>